<reference key="1">
    <citation type="journal article" date="1999" name="Science">
        <title>Genome sequence of the radioresistant bacterium Deinococcus radiodurans R1.</title>
        <authorList>
            <person name="White O."/>
            <person name="Eisen J.A."/>
            <person name="Heidelberg J.F."/>
            <person name="Hickey E.K."/>
            <person name="Peterson J.D."/>
            <person name="Dodson R.J."/>
            <person name="Haft D.H."/>
            <person name="Gwinn M.L."/>
            <person name="Nelson W.C."/>
            <person name="Richardson D.L."/>
            <person name="Moffat K.S."/>
            <person name="Qin H."/>
            <person name="Jiang L."/>
            <person name="Pamphile W."/>
            <person name="Crosby M."/>
            <person name="Shen M."/>
            <person name="Vamathevan J.J."/>
            <person name="Lam P."/>
            <person name="McDonald L.A."/>
            <person name="Utterback T.R."/>
            <person name="Zalewski C."/>
            <person name="Makarova K.S."/>
            <person name="Aravind L."/>
            <person name="Daly M.J."/>
            <person name="Minton K.W."/>
            <person name="Fleischmann R.D."/>
            <person name="Ketchum K.A."/>
            <person name="Nelson K.E."/>
            <person name="Salzberg S.L."/>
            <person name="Smith H.O."/>
            <person name="Venter J.C."/>
            <person name="Fraser C.M."/>
        </authorList>
    </citation>
    <scope>NUCLEOTIDE SEQUENCE [LARGE SCALE GENOMIC DNA]</scope>
    <source>
        <strain>ATCC 13939 / DSM 20539 / JCM 16871 / CCUG 27074 / LMG 4051 / NBRC 15346 / NCIMB 9279 / VKM B-1422 / R1</strain>
    </source>
</reference>
<protein>
    <recommendedName>
        <fullName evidence="1">Urease accessory protein UreE</fullName>
    </recommendedName>
</protein>
<feature type="chain" id="PRO_0000223412" description="Urease accessory protein UreE">
    <location>
        <begin position="1"/>
        <end position="155"/>
    </location>
</feature>
<organism>
    <name type="scientific">Deinococcus radiodurans (strain ATCC 13939 / DSM 20539 / JCM 16871 / CCUG 27074 / LMG 4051 / NBRC 15346 / NCIMB 9279 / VKM B-1422 / R1)</name>
    <dbReference type="NCBI Taxonomy" id="243230"/>
    <lineage>
        <taxon>Bacteria</taxon>
        <taxon>Thermotogati</taxon>
        <taxon>Deinococcota</taxon>
        <taxon>Deinococci</taxon>
        <taxon>Deinococcales</taxon>
        <taxon>Deinococcaceae</taxon>
        <taxon>Deinococcus</taxon>
    </lineage>
</organism>
<dbReference type="EMBL" id="AE001825">
    <property type="protein sequence ID" value="AAF12488.1"/>
    <property type="molecule type" value="Genomic_DNA"/>
</dbReference>
<dbReference type="PIR" id="G75585">
    <property type="entry name" value="G75585"/>
</dbReference>
<dbReference type="RefSeq" id="NP_285637.1">
    <property type="nucleotide sequence ID" value="NC_001264.1"/>
</dbReference>
<dbReference type="RefSeq" id="WP_010889573.1">
    <property type="nucleotide sequence ID" value="NC_001264.1"/>
</dbReference>
<dbReference type="SMR" id="Q9RYJ8"/>
<dbReference type="STRING" id="243230.DR_A0314"/>
<dbReference type="PaxDb" id="243230-DR_A0314"/>
<dbReference type="EnsemblBacteria" id="AAF12488">
    <property type="protein sequence ID" value="AAF12488"/>
    <property type="gene ID" value="DR_A0314"/>
</dbReference>
<dbReference type="GeneID" id="69519198"/>
<dbReference type="KEGG" id="dra:DR_A0314"/>
<dbReference type="PATRIC" id="fig|243230.17.peg.3204"/>
<dbReference type="eggNOG" id="COG2371">
    <property type="taxonomic scope" value="Bacteria"/>
</dbReference>
<dbReference type="HOGENOM" id="CLU_1692612_0_0_0"/>
<dbReference type="InParanoid" id="Q9RYJ8"/>
<dbReference type="OrthoDB" id="68699at2"/>
<dbReference type="Proteomes" id="UP000002524">
    <property type="component" value="Chromosome 2"/>
</dbReference>
<dbReference type="GO" id="GO:0005737">
    <property type="term" value="C:cytoplasm"/>
    <property type="evidence" value="ECO:0007669"/>
    <property type="project" value="UniProtKB-SubCell"/>
</dbReference>
<dbReference type="GO" id="GO:0016151">
    <property type="term" value="F:nickel cation binding"/>
    <property type="evidence" value="ECO:0007669"/>
    <property type="project" value="UniProtKB-UniRule"/>
</dbReference>
<dbReference type="GO" id="GO:0051082">
    <property type="term" value="F:unfolded protein binding"/>
    <property type="evidence" value="ECO:0007669"/>
    <property type="project" value="UniProtKB-UniRule"/>
</dbReference>
<dbReference type="GO" id="GO:0006457">
    <property type="term" value="P:protein folding"/>
    <property type="evidence" value="ECO:0007669"/>
    <property type="project" value="InterPro"/>
</dbReference>
<dbReference type="CDD" id="cd00571">
    <property type="entry name" value="UreE"/>
    <property type="match status" value="1"/>
</dbReference>
<dbReference type="Gene3D" id="2.60.260.20">
    <property type="entry name" value="Urease metallochaperone UreE, N-terminal domain"/>
    <property type="match status" value="1"/>
</dbReference>
<dbReference type="Gene3D" id="3.30.70.790">
    <property type="entry name" value="UreE, C-terminal domain"/>
    <property type="match status" value="1"/>
</dbReference>
<dbReference type="HAMAP" id="MF_00822">
    <property type="entry name" value="UreE"/>
    <property type="match status" value="1"/>
</dbReference>
<dbReference type="InterPro" id="IPR012406">
    <property type="entry name" value="UreE"/>
</dbReference>
<dbReference type="InterPro" id="IPR004029">
    <property type="entry name" value="UreE_N"/>
</dbReference>
<dbReference type="InterPro" id="IPR036118">
    <property type="entry name" value="UreE_N_sf"/>
</dbReference>
<dbReference type="NCBIfam" id="NF009756">
    <property type="entry name" value="PRK13261.2-2"/>
    <property type="match status" value="1"/>
</dbReference>
<dbReference type="Pfam" id="PF02814">
    <property type="entry name" value="UreE_N"/>
    <property type="match status" value="1"/>
</dbReference>
<dbReference type="PIRSF" id="PIRSF036402">
    <property type="entry name" value="Ureas_acces_UreE"/>
    <property type="match status" value="1"/>
</dbReference>
<dbReference type="SMART" id="SM00988">
    <property type="entry name" value="UreE_N"/>
    <property type="match status" value="1"/>
</dbReference>
<dbReference type="SUPFAM" id="SSF69737">
    <property type="entry name" value="Urease metallochaperone UreE, C-terminal domain"/>
    <property type="match status" value="1"/>
</dbReference>
<dbReference type="SUPFAM" id="SSF69287">
    <property type="entry name" value="Urease metallochaperone UreE, N-terminal domain"/>
    <property type="match status" value="1"/>
</dbReference>
<evidence type="ECO:0000255" key="1">
    <source>
        <dbReference type="HAMAP-Rule" id="MF_00822"/>
    </source>
</evidence>
<accession>Q9RYJ8</accession>
<gene>
    <name evidence="1" type="primary">ureE</name>
    <name type="ordered locus">DR_A0314</name>
</gene>
<proteinExistence type="inferred from homology"/>
<name>UREE_DEIRA</name>
<comment type="function">
    <text evidence="1">Involved in urease metallocenter assembly. Binds nickel. Probably functions as a nickel donor during metallocenter assembly.</text>
</comment>
<comment type="subcellular location">
    <subcellularLocation>
        <location evidence="1">Cytoplasm</location>
    </subcellularLocation>
</comment>
<comment type="similarity">
    <text evidence="1">Belongs to the UreE family.</text>
</comment>
<sequence length="155" mass="16712">MTRLTGLRRPLLPIAGAKQAPEQAIDGPQVEVPLTAVDRRRVRRRLHAPDGAELQLAFPTGTVLSPGTVLGTRGGVSYVVSAAPEDVAVVVPRTLAEAAHTAHAVGNLHRDFVEDAGAFLTPWDAPIELLLTRLGVPFTRETRPFHGRPSWEHEG</sequence>
<keyword id="KW-0143">Chaperone</keyword>
<keyword id="KW-0963">Cytoplasm</keyword>
<keyword id="KW-0533">Nickel</keyword>
<keyword id="KW-0996">Nickel insertion</keyword>
<keyword id="KW-1185">Reference proteome</keyword>